<name>MEL_SACCA</name>
<gene>
    <name type="primary">MEL</name>
</gene>
<keyword id="KW-1015">Disulfide bond</keyword>
<keyword id="KW-0325">Glycoprotein</keyword>
<keyword id="KW-0326">Glycosidase</keyword>
<keyword id="KW-0378">Hydrolase</keyword>
<keyword id="KW-0964">Secreted</keyword>
<keyword id="KW-0732">Signal</keyword>
<organism>
    <name type="scientific">Saccharomyces pastorianus (strain ATCC 76529 / Carlsberg bottom yeast no.1 / CBS 1513 / CLIB 176 / NBRC 1167 / NCYC 396 / NRRL Y-12693)</name>
    <name type="common">Saaz-type lager yeast</name>
    <name type="synonym">Saccharomyces carlsbergensis</name>
    <dbReference type="NCBI Taxonomy" id="1073566"/>
    <lineage>
        <taxon>Eukaryota</taxon>
        <taxon>Fungi</taxon>
        <taxon>Dikarya</taxon>
        <taxon>Ascomycota</taxon>
        <taxon>Saccharomycotina</taxon>
        <taxon>Saccharomycetes</taxon>
        <taxon>Saccharomycetales</taxon>
        <taxon>Saccharomycetaceae</taxon>
        <taxon>Saccharomyces</taxon>
    </lineage>
</organism>
<evidence type="ECO:0000250" key="1"/>
<evidence type="ECO:0000255" key="2"/>
<evidence type="ECO:0000305" key="3"/>
<dbReference type="EC" id="3.2.1.22"/>
<dbReference type="EMBL" id="M58484">
    <property type="protein sequence ID" value="AAA34769.1"/>
    <property type="molecule type" value="Genomic_DNA"/>
</dbReference>
<dbReference type="PIR" id="JQ1021">
    <property type="entry name" value="JQ1021"/>
</dbReference>
<dbReference type="SMR" id="Q03647"/>
<dbReference type="CAZy" id="GH27">
    <property type="family name" value="Glycoside Hydrolase Family 27"/>
</dbReference>
<dbReference type="GlyCosmos" id="Q03647">
    <property type="glycosylation" value="9 sites, No reported glycans"/>
</dbReference>
<dbReference type="GO" id="GO:0005576">
    <property type="term" value="C:extracellular region"/>
    <property type="evidence" value="ECO:0007669"/>
    <property type="project" value="UniProtKB-SubCell"/>
</dbReference>
<dbReference type="GO" id="GO:0004557">
    <property type="term" value="F:alpha-galactosidase activity"/>
    <property type="evidence" value="ECO:0007669"/>
    <property type="project" value="UniProtKB-EC"/>
</dbReference>
<dbReference type="GO" id="GO:0005975">
    <property type="term" value="P:carbohydrate metabolic process"/>
    <property type="evidence" value="ECO:0007669"/>
    <property type="project" value="InterPro"/>
</dbReference>
<dbReference type="CDD" id="cd14792">
    <property type="entry name" value="GH27"/>
    <property type="match status" value="1"/>
</dbReference>
<dbReference type="FunFam" id="3.20.20.70:FF:000202">
    <property type="entry name" value="Alpha-galactosidase"/>
    <property type="match status" value="1"/>
</dbReference>
<dbReference type="Gene3D" id="3.20.20.70">
    <property type="entry name" value="Aldolase class I"/>
    <property type="match status" value="1"/>
</dbReference>
<dbReference type="Gene3D" id="2.60.40.1180">
    <property type="entry name" value="Golgi alpha-mannosidase II"/>
    <property type="match status" value="1"/>
</dbReference>
<dbReference type="InterPro" id="IPR013785">
    <property type="entry name" value="Aldolase_TIM"/>
</dbReference>
<dbReference type="InterPro" id="IPR002241">
    <property type="entry name" value="Glyco_hydro_27"/>
</dbReference>
<dbReference type="InterPro" id="IPR013780">
    <property type="entry name" value="Glyco_hydro_b"/>
</dbReference>
<dbReference type="InterPro" id="IPR006215">
    <property type="entry name" value="Glyco_hydro_melibiase"/>
</dbReference>
<dbReference type="InterPro" id="IPR017853">
    <property type="entry name" value="Glycoside_hydrolase_SF"/>
</dbReference>
<dbReference type="InterPro" id="IPR041233">
    <property type="entry name" value="Melibiase_C"/>
</dbReference>
<dbReference type="PANTHER" id="PTHR11452:SF75">
    <property type="entry name" value="ALPHA-GALACTOSIDASE MEL1"/>
    <property type="match status" value="1"/>
</dbReference>
<dbReference type="PANTHER" id="PTHR11452">
    <property type="entry name" value="ALPHA-GALACTOSIDASE/ALPHA-N-ACETYLGALACTOSAMINIDASE"/>
    <property type="match status" value="1"/>
</dbReference>
<dbReference type="Pfam" id="PF16499">
    <property type="entry name" value="Melibiase_2"/>
    <property type="match status" value="1"/>
</dbReference>
<dbReference type="Pfam" id="PF17801">
    <property type="entry name" value="Melibiase_C"/>
    <property type="match status" value="1"/>
</dbReference>
<dbReference type="PRINTS" id="PR00740">
    <property type="entry name" value="GLHYDRLASE27"/>
</dbReference>
<dbReference type="PRINTS" id="PR00748">
    <property type="entry name" value="MELIBIASE"/>
</dbReference>
<dbReference type="SUPFAM" id="SSF51445">
    <property type="entry name" value="(Trans)glycosidases"/>
    <property type="match status" value="1"/>
</dbReference>
<dbReference type="SUPFAM" id="SSF51011">
    <property type="entry name" value="Glycosyl hydrolase domain"/>
    <property type="match status" value="1"/>
</dbReference>
<reference key="1">
    <citation type="journal article" date="1991" name="Gene">
        <title>Cloning sequence and chromosomal location of a MEL gene from Saccharomyces carlsbergenesis NCYC396.</title>
        <authorList>
            <person name="Turakainen H."/>
            <person name="Korhola M."/>
            <person name="Aho S."/>
        </authorList>
    </citation>
    <scope>NUCLEOTIDE SEQUENCE [GENOMIC DNA]</scope>
    <source>
        <strain>ATCC 76529 / Carlsberg bottom yeast no.1 / CBS 1513 / CLIB 176 / NBRC 1167 / NCYC 396 / NRRL Y-12693</strain>
    </source>
</reference>
<accession>Q03647</accession>
<protein>
    <recommendedName>
        <fullName>Alpha-galactosidase</fullName>
        <ecNumber>3.2.1.22</ecNumber>
    </recommendedName>
    <alternativeName>
        <fullName>Alpha-D-galactoside galactohydrolase</fullName>
    </alternativeName>
    <alternativeName>
        <fullName>MELx</fullName>
    </alternativeName>
    <alternativeName>
        <fullName>Melibiase</fullName>
    </alternativeName>
</protein>
<feature type="signal peptide" evidence="1">
    <location>
        <begin position="1"/>
        <end position="18"/>
    </location>
</feature>
<feature type="chain" id="PRO_0000001009" description="Alpha-galactosidase">
    <location>
        <begin position="19"/>
        <end position="471"/>
    </location>
</feature>
<feature type="active site" description="Nucleophile" evidence="1">
    <location>
        <position position="149"/>
    </location>
</feature>
<feature type="active site" description="Proton donor" evidence="1">
    <location>
        <position position="209"/>
    </location>
</feature>
<feature type="binding site" evidence="1">
    <location>
        <position position="72"/>
    </location>
    <ligand>
        <name>substrate</name>
    </ligand>
</feature>
<feature type="binding site" evidence="1">
    <location>
        <position position="73"/>
    </location>
    <ligand>
        <name>substrate</name>
    </ligand>
</feature>
<feature type="binding site" evidence="1">
    <location>
        <position position="147"/>
    </location>
    <ligand>
        <name>substrate</name>
    </ligand>
</feature>
<feature type="binding site" evidence="1">
    <location>
        <position position="205"/>
    </location>
    <ligand>
        <name>substrate</name>
    </ligand>
</feature>
<feature type="binding site" evidence="1">
    <location>
        <position position="251"/>
    </location>
    <ligand>
        <name>substrate</name>
    </ligand>
</feature>
<feature type="glycosylation site" description="N-linked (GlcNAc...) asparagine" evidence="2">
    <location>
        <position position="82"/>
    </location>
</feature>
<feature type="glycosylation site" description="N-linked (GlcNAc...) asparagine" evidence="2">
    <location>
        <position position="175"/>
    </location>
</feature>
<feature type="glycosylation site" description="N-linked (GlcNAc...) asparagine" evidence="2">
    <location>
        <position position="270"/>
    </location>
</feature>
<feature type="glycosylation site" description="N-linked (GlcNAc...) asparagine" evidence="2">
    <location>
        <position position="403"/>
    </location>
</feature>
<feature type="glycosylation site" description="N-linked (GlcNAc...) asparagine" evidence="2">
    <location>
        <position position="412"/>
    </location>
</feature>
<feature type="glycosylation site" description="N-linked (GlcNAc...) asparagine" evidence="2">
    <location>
        <position position="417"/>
    </location>
</feature>
<feature type="glycosylation site" description="N-linked (GlcNAc...) asparagine" evidence="2">
    <location>
        <position position="422"/>
    </location>
</feature>
<feature type="glycosylation site" description="N-linked (GlcNAc...) asparagine" evidence="2">
    <location>
        <position position="435"/>
    </location>
</feature>
<feature type="glycosylation site" description="N-linked (GlcNAc...) asparagine" evidence="2">
    <location>
        <position position="454"/>
    </location>
</feature>
<feature type="disulfide bond" evidence="1">
    <location>
        <begin position="42"/>
        <end position="74"/>
    </location>
</feature>
<feature type="disulfide bond" evidence="1">
    <location>
        <begin position="121"/>
        <end position="151"/>
    </location>
</feature>
<feature type="disulfide bond" evidence="1">
    <location>
        <begin position="221"/>
        <end position="237"/>
    </location>
</feature>
<feature type="disulfide bond" evidence="1">
    <location>
        <begin position="223"/>
        <end position="230"/>
    </location>
</feature>
<sequence length="471" mass="52000">MFLLYLFTSFAAVSGVLGSSPSYNGLGLTPQMGWDNWNTFACDVSEQLLLDTADRISEIGLKDLGYTYVILDDCWSSGRTANGTLVADKEKFPNGMSHVADHLHNNNFLFGMYSSAGEYTCAGYPGSLGHEEEDAEFFASNGVDYLKYDNCYNKGQFGAPETSYKRYKAMSDALNKTGRPIFYSLCNWGQDLTHYWGSDIANSWRMSGDIYPQFTRPDSRCPCDGDQFDCAYAGFHCSIMNILNKAAPMGQNAGIGGWNDLDNLEVGVGNLTDDEEKAHFSMWAMVKSPLVIGADVNHLKASSYSIYSQASVIAINQDPKGVPATRVWRHQVPQTDKYGQGEIQFWSGPLDNGDQVIALLNGGIKPRPMNTNLEEIFFDSYLGFEQLSSNWDIYDLWANRVDNATSANILNNNSVGNATIYNATALSYKDGMAKNDTRLFGTKIGSISPDGLLNTTVPAHGIAFYRLRRST</sequence>
<proteinExistence type="inferred from homology"/>
<comment type="catalytic activity">
    <reaction>
        <text>Hydrolysis of terminal, non-reducing alpha-D-galactose residues in alpha-D-galactosides, including galactose oligosaccharides, galactomannans and galactolipids.</text>
        <dbReference type="EC" id="3.2.1.22"/>
    </reaction>
</comment>
<comment type="subunit">
    <text evidence="1">Homotetramer.</text>
</comment>
<comment type="subcellular location">
    <subcellularLocation>
        <location evidence="1">Secreted</location>
    </subcellularLocation>
</comment>
<comment type="similarity">
    <text evidence="3">Belongs to the glycosyl hydrolase 27 family.</text>
</comment>